<name>VPS10_PARBA</name>
<dbReference type="EMBL" id="KN293994">
    <property type="protein sequence ID" value="EEH39288.1"/>
    <property type="molecule type" value="Genomic_DNA"/>
</dbReference>
<dbReference type="RefSeq" id="XP_002796742.1">
    <property type="nucleotide sequence ID" value="XM_002796696.2"/>
</dbReference>
<dbReference type="SMR" id="C1GTA5"/>
<dbReference type="STRING" id="502779.C1GTA5"/>
<dbReference type="GlyCosmos" id="C1GTA5">
    <property type="glycosylation" value="4 sites, No reported glycans"/>
</dbReference>
<dbReference type="GeneID" id="9099708"/>
<dbReference type="KEGG" id="pbl:PAAG_01750"/>
<dbReference type="VEuPathDB" id="FungiDB:PAAG_01750"/>
<dbReference type="eggNOG" id="KOG3511">
    <property type="taxonomic scope" value="Eukaryota"/>
</dbReference>
<dbReference type="HOGENOM" id="CLU_000700_0_0_1"/>
<dbReference type="OMA" id="ATMSEFI"/>
<dbReference type="OrthoDB" id="443634at2759"/>
<dbReference type="Proteomes" id="UP000002059">
    <property type="component" value="Partially assembled WGS sequence"/>
</dbReference>
<dbReference type="GO" id="GO:0005829">
    <property type="term" value="C:cytosol"/>
    <property type="evidence" value="ECO:0007669"/>
    <property type="project" value="GOC"/>
</dbReference>
<dbReference type="GO" id="GO:0005794">
    <property type="term" value="C:Golgi apparatus"/>
    <property type="evidence" value="ECO:0007669"/>
    <property type="project" value="UniProtKB-SubCell"/>
</dbReference>
<dbReference type="GO" id="GO:0016020">
    <property type="term" value="C:membrane"/>
    <property type="evidence" value="ECO:0007669"/>
    <property type="project" value="UniProtKB-KW"/>
</dbReference>
<dbReference type="GO" id="GO:0006895">
    <property type="term" value="P:Golgi to endosome transport"/>
    <property type="evidence" value="ECO:0007669"/>
    <property type="project" value="TreeGrafter"/>
</dbReference>
<dbReference type="GO" id="GO:0006896">
    <property type="term" value="P:Golgi to vacuole transport"/>
    <property type="evidence" value="ECO:0007669"/>
    <property type="project" value="TreeGrafter"/>
</dbReference>
<dbReference type="GO" id="GO:0006623">
    <property type="term" value="P:protein targeting to vacuole"/>
    <property type="evidence" value="ECO:0007669"/>
    <property type="project" value="TreeGrafter"/>
</dbReference>
<dbReference type="CDD" id="cd15482">
    <property type="entry name" value="Sialidase_non-viral"/>
    <property type="match status" value="2"/>
</dbReference>
<dbReference type="FunFam" id="3.30.60.270:FF:000005">
    <property type="entry name" value="Sortilin"/>
    <property type="match status" value="2"/>
</dbReference>
<dbReference type="FunFam" id="2.10.70.80:FF:000001">
    <property type="entry name" value="Sortilin-related VPS10 domain-containing receptor 1"/>
    <property type="match status" value="1"/>
</dbReference>
<dbReference type="Gene3D" id="2.10.70.80">
    <property type="match status" value="2"/>
</dbReference>
<dbReference type="Gene3D" id="3.30.60.270">
    <property type="match status" value="2"/>
</dbReference>
<dbReference type="Gene3D" id="2.130.10.10">
    <property type="entry name" value="YVTN repeat-like/Quinoprotein amine dehydrogenase"/>
    <property type="match status" value="3"/>
</dbReference>
<dbReference type="InterPro" id="IPR031777">
    <property type="entry name" value="Sortilin_C"/>
</dbReference>
<dbReference type="InterPro" id="IPR031778">
    <property type="entry name" value="Sortilin_N"/>
</dbReference>
<dbReference type="InterPro" id="IPR006581">
    <property type="entry name" value="VPS10"/>
</dbReference>
<dbReference type="InterPro" id="IPR050310">
    <property type="entry name" value="VPS10-sortilin"/>
</dbReference>
<dbReference type="InterPro" id="IPR015943">
    <property type="entry name" value="WD40/YVTN_repeat-like_dom_sf"/>
</dbReference>
<dbReference type="PANTHER" id="PTHR12106">
    <property type="entry name" value="SORTILIN RELATED"/>
    <property type="match status" value="1"/>
</dbReference>
<dbReference type="PANTHER" id="PTHR12106:SF27">
    <property type="entry name" value="SORTILIN-RELATED RECEPTOR"/>
    <property type="match status" value="1"/>
</dbReference>
<dbReference type="Pfam" id="PF15902">
    <property type="entry name" value="Sortilin-Vps10"/>
    <property type="match status" value="2"/>
</dbReference>
<dbReference type="Pfam" id="PF15901">
    <property type="entry name" value="Sortilin_C"/>
    <property type="match status" value="2"/>
</dbReference>
<dbReference type="SMART" id="SM00602">
    <property type="entry name" value="VPS10"/>
    <property type="match status" value="2"/>
</dbReference>
<dbReference type="SUPFAM" id="SSF110296">
    <property type="entry name" value="Oligoxyloglucan reducing end-specific cellobiohydrolase"/>
    <property type="match status" value="2"/>
</dbReference>
<sequence length="1496" mass="167980">MILRRLVLAGSLLLATAFTSAKKADSPIITATRFDHEPINLFYFGDSDVVMLQDIKNGDVYVSRDAGVKWDMVNLDGLKGQALSLWSHPTDRTKAYILGKAGKHWVTNDQAKSWHEFSADVEFFQSLYPLVFHGKDSDRVLLQGQKCFGRDCKEVTYYTTDGFKTVDILMENARGCNWAVSTPIFGDGLNLSKEVNDRIFCIVPGLQSPWSDYNRLLYSDRFFKQDPGTEAPLDSGRAVSGVVRTASVKKYLLAAAKSARTSELALYVTDDGSQWHRAEFDGHRVEEDAYTVLESTNYSIQIDVVAETPSAPMGRLFTSNSNGTYFTRNIDHTNRNSLGFVDFEKIANIQGIILVNTVKNWEDVEMSALVEKKIISQISFDDGRTFQPLKAGKHDLHLHSVTHLSNSGRVFSSPAPGLVMGVGNTGGHLKDYYDGDLYVSDDAGITWRKALDEAHKYEFGDQGSVIVAIFDEGRTGKISYSLNHGKDWKEASLPDGIKIRARILTTMPDSTGLKFLLVGSAKKDSEVEHYVISISFTDMEERTCGKDDFETWPARLNEKNEPDCLMGHKQFYQRRKADVDCFIKKKFQEPVPQFEPCKCTVEDFECDFNFIRSTDGKSCVPARNLPVPEGACKKPDDKYMGSSGFRLIPGNACIREGGVELDKQIERVCTDTLTVPVSGEIAVQKTFFTADNYKGYFYLERKDSSKGDDETVIMITSELQIYITRDHGKIWKEIFPGESITRIVPHQYFDDVAYFLTNSGDGWYTLDRGENFRTFKVPIPPNQDKLPVLSFHPERRDWLIWTGAVECKTRGPQCHSVAYYSTNHGSEWHFLMQYVRRCEFIKREARGSSNNLVFCEQFENENPLNHHLQLLSTDDWFSEKKVHYNNILDFATMQEFIIVAVRGEKPQDSLSVGVSVDGETFAYADLPANVQIPVQRAYTVLESRTHAAFLHVTVNNIEDHEYGSILKSNSNGTSYVLSLSAVNRNTYGYADFEKMQGMEGVAMANVVGNVADVEKGAAKKYRTMITHNDGAEWTLLSPPSKDSEGRDYSCSTKGGKPTDKCALHLHSYTERVDPRDTYSSPAAIGVMLGTGNVGEYLTLKSEADTFITRDGGITWEEVKKDKYQWEFGDSGSIIVIVPESRPTKTLFYSLDEGKSWKEFQFSEVEMLIRDISTVPSDTSRNFLLWGNEVGNGKKPGIATVNVDFSNLKERHKQCVLNEEKPEADDYYLWEPIHPFQPNGCLFGHRAKYHRKRPDRDCFIGRELQHLDSIGDICECTRSDYECDYNYEPQIDGTCAPVPGLQPLDPKLICMEDPKAVEWYEPTGYRRIPLTKCEGGKQLHHIIPHACPNKEEEFLKKHPGLRGVGLFFVVMGPIGLAAAIGYYVYTRWDGKFGRIRLGDTGSGGFFASDSLFISIPVAIVAGVVAVATALPLLASSLWRSVKGYARVPGGSSSQRVYSSRAAFAAQRADYVGVVDDEDELLGAEDFDEEENDDRGQV</sequence>
<keyword id="KW-0325">Glycoprotein</keyword>
<keyword id="KW-0333">Golgi apparatus</keyword>
<keyword id="KW-0472">Membrane</keyword>
<keyword id="KW-0653">Protein transport</keyword>
<keyword id="KW-0675">Receptor</keyword>
<keyword id="KW-1185">Reference proteome</keyword>
<keyword id="KW-0677">Repeat</keyword>
<keyword id="KW-0732">Signal</keyword>
<keyword id="KW-0812">Transmembrane</keyword>
<keyword id="KW-1133">Transmembrane helix</keyword>
<keyword id="KW-0813">Transport</keyword>
<feature type="signal peptide" evidence="2">
    <location>
        <begin position="1"/>
        <end position="21"/>
    </location>
</feature>
<feature type="chain" id="PRO_0000407527" description="Vacuolar protein sorting/targeting protein 10">
    <location>
        <begin position="22"/>
        <end position="1496"/>
    </location>
</feature>
<feature type="topological domain" description="Lumenal" evidence="2">
    <location>
        <begin position="22"/>
        <end position="1362"/>
    </location>
</feature>
<feature type="transmembrane region" description="Helical" evidence="2">
    <location>
        <begin position="1363"/>
        <end position="1383"/>
    </location>
</feature>
<feature type="topological domain" description="Cytoplasmic" evidence="2">
    <location>
        <begin position="1384"/>
        <end position="1409"/>
    </location>
</feature>
<feature type="transmembrane region" description="Helical" evidence="2">
    <location>
        <begin position="1410"/>
        <end position="1430"/>
    </location>
</feature>
<feature type="topological domain" description="Lumenal" evidence="2">
    <location>
        <begin position="1431"/>
        <end position="1496"/>
    </location>
</feature>
<feature type="repeat" description="BNR 1">
    <location>
        <begin position="61"/>
        <end position="71"/>
    </location>
</feature>
<feature type="repeat" description="BNR 2">
    <location>
        <begin position="377"/>
        <end position="387"/>
    </location>
</feature>
<feature type="repeat" description="BNR 3">
    <location>
        <begin position="438"/>
        <end position="448"/>
    </location>
</feature>
<feature type="repeat" description="BNR 4">
    <location>
        <begin position="480"/>
        <end position="489"/>
    </location>
</feature>
<feature type="repeat" description="BNR 5">
    <location>
        <begin position="722"/>
        <end position="732"/>
    </location>
</feature>
<feature type="repeat" description="BNR 6">
    <location>
        <begin position="819"/>
        <end position="829"/>
    </location>
</feature>
<feature type="repeat" description="BNR 7">
    <location>
        <begin position="1106"/>
        <end position="1116"/>
    </location>
</feature>
<feature type="repeat" description="BNR 8">
    <location>
        <begin position="1147"/>
        <end position="1157"/>
    </location>
</feature>
<feature type="glycosylation site" description="N-linked (GlcNAc...) asparagine" evidence="2">
    <location>
        <position position="190"/>
    </location>
</feature>
<feature type="glycosylation site" description="N-linked (GlcNAc...) asparagine" evidence="2">
    <location>
        <position position="297"/>
    </location>
</feature>
<feature type="glycosylation site" description="N-linked (GlcNAc...) asparagine" evidence="2">
    <location>
        <position position="322"/>
    </location>
</feature>
<feature type="glycosylation site" description="N-linked (GlcNAc...) asparagine" evidence="2">
    <location>
        <position position="971"/>
    </location>
</feature>
<reference key="1">
    <citation type="journal article" date="2011" name="PLoS Genet.">
        <title>Comparative genomic analysis of human fungal pathogens causing paracoccidioidomycosis.</title>
        <authorList>
            <person name="Desjardins C.A."/>
            <person name="Champion M.D."/>
            <person name="Holder J.W."/>
            <person name="Muszewska A."/>
            <person name="Goldberg J."/>
            <person name="Bailao A.M."/>
            <person name="Brigido M.M."/>
            <person name="Ferreira M.E."/>
            <person name="Garcia A.M."/>
            <person name="Grynberg M."/>
            <person name="Gujja S."/>
            <person name="Heiman D.I."/>
            <person name="Henn M.R."/>
            <person name="Kodira C.D."/>
            <person name="Leon-Narvaez H."/>
            <person name="Longo L.V.G."/>
            <person name="Ma L.-J."/>
            <person name="Malavazi I."/>
            <person name="Matsuo A.L."/>
            <person name="Morais F.V."/>
            <person name="Pereira M."/>
            <person name="Rodriguez-Brito S."/>
            <person name="Sakthikumar S."/>
            <person name="Salem-Izacc S.M."/>
            <person name="Sykes S.M."/>
            <person name="Teixeira M.M."/>
            <person name="Vallejo M.C."/>
            <person name="Walter M.E."/>
            <person name="Yandava C."/>
            <person name="Young S."/>
            <person name="Zeng Q."/>
            <person name="Zucker J."/>
            <person name="Felipe M.S."/>
            <person name="Goldman G.H."/>
            <person name="Haas B.J."/>
            <person name="McEwen J.G."/>
            <person name="Nino-Vega G."/>
            <person name="Puccia R."/>
            <person name="San-Blas G."/>
            <person name="Soares C.M."/>
            <person name="Birren B.W."/>
            <person name="Cuomo C.A."/>
        </authorList>
    </citation>
    <scope>NUCLEOTIDE SEQUENCE [LARGE SCALE GENOMIC DNA]</scope>
    <source>
        <strain>ATCC MYA-826 / Pb01</strain>
    </source>
</reference>
<protein>
    <recommendedName>
        <fullName>Vacuolar protein sorting/targeting protein 10</fullName>
    </recommendedName>
    <alternativeName>
        <fullName>Carboxypeptidase Y receptor</fullName>
        <shortName>CPY receptor</shortName>
    </alternativeName>
    <alternativeName>
        <fullName>Sortilin VPS10</fullName>
    </alternativeName>
    <alternativeName>
        <fullName>Vacuolar carboxypeptidase sorting receptor VPS10</fullName>
    </alternativeName>
</protein>
<gene>
    <name type="primary">VPS10</name>
    <name type="ORF">PAAG_01750</name>
</gene>
<comment type="function">
    <text evidence="1">Functions as a sorting receptor in the Golgi compartment required for the intracellular sorting and delivery of soluble vacuolar proteins, like carboxypeptidase Y (CPY) and proteinase A. Executes multiple rounds of sorting by cycling between the late Golgi and a prevacuolar endosome-like compartment (By similarity).</text>
</comment>
<comment type="subcellular location">
    <subcellularLocation>
        <location evidence="1">Golgi apparatus</location>
        <location evidence="1">trans-Golgi network membrane</location>
        <topology evidence="1">Multi-pass membrane protein</topology>
    </subcellularLocation>
    <subcellularLocation>
        <location evidence="1">Prevacuolar compartment membrane</location>
        <topology evidence="1">Multi-pass membrane protein</topology>
    </subcellularLocation>
    <text evidence="1">Cycles between the Golgi apparatus and the prevacuolar compartment.</text>
</comment>
<comment type="similarity">
    <text evidence="3">Belongs to the VPS10-related sortilin family.</text>
</comment>
<evidence type="ECO:0000250" key="1"/>
<evidence type="ECO:0000255" key="2"/>
<evidence type="ECO:0000305" key="3"/>
<proteinExistence type="inferred from homology"/>
<accession>C1GTA5</accession>
<organism>
    <name type="scientific">Paracoccidioides lutzii (strain ATCC MYA-826 / Pb01)</name>
    <name type="common">Paracoccidioides brasiliensis</name>
    <dbReference type="NCBI Taxonomy" id="502779"/>
    <lineage>
        <taxon>Eukaryota</taxon>
        <taxon>Fungi</taxon>
        <taxon>Dikarya</taxon>
        <taxon>Ascomycota</taxon>
        <taxon>Pezizomycotina</taxon>
        <taxon>Eurotiomycetes</taxon>
        <taxon>Eurotiomycetidae</taxon>
        <taxon>Onygenales</taxon>
        <taxon>Ajellomycetaceae</taxon>
        <taxon>Paracoccidioides</taxon>
    </lineage>
</organism>